<proteinExistence type="inferred from homology"/>
<comment type="function">
    <text evidence="1">Joins adenosylcobinamide-GDP and alpha-ribazole to generate adenosylcobalamin (Ado-cobalamin). Also synthesizes adenosylcobalamin 5'-phosphate from adenosylcobinamide-GDP and alpha-ribazole 5'-phosphate.</text>
</comment>
<comment type="catalytic activity">
    <reaction evidence="1">
        <text>alpha-ribazole + adenosylcob(III)inamide-GDP = adenosylcob(III)alamin + GMP + H(+)</text>
        <dbReference type="Rhea" id="RHEA:16049"/>
        <dbReference type="ChEBI" id="CHEBI:10329"/>
        <dbReference type="ChEBI" id="CHEBI:15378"/>
        <dbReference type="ChEBI" id="CHEBI:18408"/>
        <dbReference type="ChEBI" id="CHEBI:58115"/>
        <dbReference type="ChEBI" id="CHEBI:60487"/>
        <dbReference type="EC" id="2.7.8.26"/>
    </reaction>
</comment>
<comment type="catalytic activity">
    <reaction evidence="1">
        <text>alpha-ribazole 5'-phosphate + adenosylcob(III)inamide-GDP = adenosylcob(III)alamin 5'-phosphate + GMP + H(+)</text>
        <dbReference type="Rhea" id="RHEA:23560"/>
        <dbReference type="ChEBI" id="CHEBI:15378"/>
        <dbReference type="ChEBI" id="CHEBI:57918"/>
        <dbReference type="ChEBI" id="CHEBI:58115"/>
        <dbReference type="ChEBI" id="CHEBI:60487"/>
        <dbReference type="ChEBI" id="CHEBI:60493"/>
        <dbReference type="EC" id="2.7.8.26"/>
    </reaction>
</comment>
<comment type="cofactor">
    <cofactor evidence="1">
        <name>Mg(2+)</name>
        <dbReference type="ChEBI" id="CHEBI:18420"/>
    </cofactor>
</comment>
<comment type="pathway">
    <text evidence="1">Cofactor biosynthesis; adenosylcobalamin biosynthesis; adenosylcobalamin from cob(II)yrinate a,c-diamide: step 7/7.</text>
</comment>
<comment type="subcellular location">
    <subcellularLocation>
        <location evidence="1">Cell membrane</location>
        <topology evidence="1">Multi-pass membrane protein</topology>
    </subcellularLocation>
</comment>
<comment type="similarity">
    <text evidence="1">Belongs to the CobS family.</text>
</comment>
<accession>B2HGX7</accession>
<sequence length="252" mass="24657">MIRSLATALSFGTVIPVPASVAAPMGRGAMTALPVVGVVLGGLAAGVTWSASLVFGPVSPLPGLLAVAVLLLATRGLHIDAVADTADGLGCYGPPQRALAVMRDGSTGPFGVAAVVLVIAVQGSAFSTLSAAGSRGIAGIAVAVFAGRVTAVLGCRRSVPAAAGSSLGSRVAGTQPISVLVAWLAVLLFASLAAAPRPWQGPAAVVAAVCAGTLLIRHCVRRFGGITGDVLGCAIELATTVTAVVLAALVRL</sequence>
<protein>
    <recommendedName>
        <fullName evidence="1">Adenosylcobinamide-GDP ribazoletransferase</fullName>
        <ecNumber evidence="1">2.7.8.26</ecNumber>
    </recommendedName>
    <alternativeName>
        <fullName evidence="1">Cobalamin synthase</fullName>
    </alternativeName>
    <alternativeName>
        <fullName evidence="1">Cobalamin-5'-phosphate synthase</fullName>
    </alternativeName>
</protein>
<feature type="chain" id="PRO_1000132588" description="Adenosylcobinamide-GDP ribazoletransferase">
    <location>
        <begin position="1"/>
        <end position="252"/>
    </location>
</feature>
<feature type="transmembrane region" description="Helical" evidence="1">
    <location>
        <begin position="5"/>
        <end position="25"/>
    </location>
</feature>
<feature type="transmembrane region" description="Helical" evidence="1">
    <location>
        <begin position="29"/>
        <end position="49"/>
    </location>
</feature>
<feature type="transmembrane region" description="Helical" evidence="1">
    <location>
        <begin position="53"/>
        <end position="73"/>
    </location>
</feature>
<feature type="transmembrane region" description="Helical" evidence="1">
    <location>
        <begin position="109"/>
        <end position="129"/>
    </location>
</feature>
<feature type="transmembrane region" description="Helical" evidence="1">
    <location>
        <begin position="135"/>
        <end position="155"/>
    </location>
</feature>
<feature type="transmembrane region" description="Helical" evidence="1">
    <location>
        <begin position="176"/>
        <end position="196"/>
    </location>
</feature>
<feature type="transmembrane region" description="Helical" evidence="1">
    <location>
        <begin position="199"/>
        <end position="216"/>
    </location>
</feature>
<feature type="transmembrane region" description="Helical" evidence="1">
    <location>
        <begin position="230"/>
        <end position="250"/>
    </location>
</feature>
<keyword id="KW-1003">Cell membrane</keyword>
<keyword id="KW-0169">Cobalamin biosynthesis</keyword>
<keyword id="KW-0460">Magnesium</keyword>
<keyword id="KW-0472">Membrane</keyword>
<keyword id="KW-1185">Reference proteome</keyword>
<keyword id="KW-0808">Transferase</keyword>
<keyword id="KW-0812">Transmembrane</keyword>
<keyword id="KW-1133">Transmembrane helix</keyword>
<dbReference type="EC" id="2.7.8.26" evidence="1"/>
<dbReference type="EMBL" id="CP000854">
    <property type="protein sequence ID" value="ACC41680.1"/>
    <property type="molecule type" value="Genomic_DNA"/>
</dbReference>
<dbReference type="RefSeq" id="WP_011741318.1">
    <property type="nucleotide sequence ID" value="NC_010612.1"/>
</dbReference>
<dbReference type="STRING" id="216594.MMAR_3253"/>
<dbReference type="GeneID" id="34342581"/>
<dbReference type="KEGG" id="mmi:MMAR_3253"/>
<dbReference type="eggNOG" id="COG0368">
    <property type="taxonomic scope" value="Bacteria"/>
</dbReference>
<dbReference type="HOGENOM" id="CLU_057426_0_2_11"/>
<dbReference type="OrthoDB" id="9794223at2"/>
<dbReference type="UniPathway" id="UPA00148">
    <property type="reaction ID" value="UER00238"/>
</dbReference>
<dbReference type="Proteomes" id="UP000001190">
    <property type="component" value="Chromosome"/>
</dbReference>
<dbReference type="GO" id="GO:0005886">
    <property type="term" value="C:plasma membrane"/>
    <property type="evidence" value="ECO:0007669"/>
    <property type="project" value="UniProtKB-SubCell"/>
</dbReference>
<dbReference type="GO" id="GO:0051073">
    <property type="term" value="F:adenosylcobinamide-GDP ribazoletransferase activity"/>
    <property type="evidence" value="ECO:0007669"/>
    <property type="project" value="UniProtKB-UniRule"/>
</dbReference>
<dbReference type="GO" id="GO:0008818">
    <property type="term" value="F:cobalamin 5'-phosphate synthase activity"/>
    <property type="evidence" value="ECO:0007669"/>
    <property type="project" value="UniProtKB-UniRule"/>
</dbReference>
<dbReference type="GO" id="GO:0009236">
    <property type="term" value="P:cobalamin biosynthetic process"/>
    <property type="evidence" value="ECO:0007669"/>
    <property type="project" value="UniProtKB-UniRule"/>
</dbReference>
<dbReference type="HAMAP" id="MF_00719">
    <property type="entry name" value="CobS"/>
    <property type="match status" value="1"/>
</dbReference>
<dbReference type="InterPro" id="IPR003805">
    <property type="entry name" value="CobS"/>
</dbReference>
<dbReference type="NCBIfam" id="NF001279">
    <property type="entry name" value="PRK00235.2-1"/>
    <property type="match status" value="1"/>
</dbReference>
<dbReference type="PANTHER" id="PTHR34148">
    <property type="entry name" value="ADENOSYLCOBINAMIDE-GDP RIBAZOLETRANSFERASE"/>
    <property type="match status" value="1"/>
</dbReference>
<dbReference type="PANTHER" id="PTHR34148:SF1">
    <property type="entry name" value="ADENOSYLCOBINAMIDE-GDP RIBAZOLETRANSFERASE"/>
    <property type="match status" value="1"/>
</dbReference>
<dbReference type="Pfam" id="PF02654">
    <property type="entry name" value="CobS"/>
    <property type="match status" value="1"/>
</dbReference>
<evidence type="ECO:0000255" key="1">
    <source>
        <dbReference type="HAMAP-Rule" id="MF_00719"/>
    </source>
</evidence>
<organism>
    <name type="scientific">Mycobacterium marinum (strain ATCC BAA-535 / M)</name>
    <dbReference type="NCBI Taxonomy" id="216594"/>
    <lineage>
        <taxon>Bacteria</taxon>
        <taxon>Bacillati</taxon>
        <taxon>Actinomycetota</taxon>
        <taxon>Actinomycetes</taxon>
        <taxon>Mycobacteriales</taxon>
        <taxon>Mycobacteriaceae</taxon>
        <taxon>Mycobacterium</taxon>
        <taxon>Mycobacterium ulcerans group</taxon>
    </lineage>
</organism>
<name>COBS_MYCMM</name>
<gene>
    <name evidence="1" type="primary">cobS</name>
    <name type="ordered locus">MMAR_3253</name>
</gene>
<reference key="1">
    <citation type="journal article" date="2008" name="Genome Res.">
        <title>Insights from the complete genome sequence of Mycobacterium marinum on the evolution of Mycobacterium tuberculosis.</title>
        <authorList>
            <person name="Stinear T.P."/>
            <person name="Seemann T."/>
            <person name="Harrison P.F."/>
            <person name="Jenkin G.A."/>
            <person name="Davies J.K."/>
            <person name="Johnson P.D."/>
            <person name="Abdellah Z."/>
            <person name="Arrowsmith C."/>
            <person name="Chillingworth T."/>
            <person name="Churcher C."/>
            <person name="Clarke K."/>
            <person name="Cronin A."/>
            <person name="Davis P."/>
            <person name="Goodhead I."/>
            <person name="Holroyd N."/>
            <person name="Jagels K."/>
            <person name="Lord A."/>
            <person name="Moule S."/>
            <person name="Mungall K."/>
            <person name="Norbertczak H."/>
            <person name="Quail M.A."/>
            <person name="Rabbinowitsch E."/>
            <person name="Walker D."/>
            <person name="White B."/>
            <person name="Whitehead S."/>
            <person name="Small P.L."/>
            <person name="Brosch R."/>
            <person name="Ramakrishnan L."/>
            <person name="Fischbach M.A."/>
            <person name="Parkhill J."/>
            <person name="Cole S.T."/>
        </authorList>
    </citation>
    <scope>NUCLEOTIDE SEQUENCE [LARGE SCALE GENOMIC DNA]</scope>
    <source>
        <strain>ATCC BAA-535 / M</strain>
    </source>
</reference>